<proteinExistence type="inferred from homology"/>
<evidence type="ECO:0000250" key="1">
    <source>
        <dbReference type="UniProtKB" id="P83952"/>
    </source>
</evidence>
<evidence type="ECO:0000255" key="2"/>
<evidence type="ECO:0000255" key="3">
    <source>
        <dbReference type="PROSITE-ProRule" id="PRU00722"/>
    </source>
</evidence>
<evidence type="ECO:0000303" key="4">
    <source>
    </source>
</evidence>
<evidence type="ECO:0000305" key="5"/>
<evidence type="ECO:0000305" key="6">
    <source>
    </source>
</evidence>
<comment type="function">
    <text evidence="1">Damages membranes of susceptible bacteria. Has no hemolytic activity. Not toxic to mice. Does not inhibit the proteinases elastase and cathepsin G.</text>
</comment>
<comment type="subcellular location">
    <subcellularLocation>
        <location evidence="6">Secreted</location>
    </subcellularLocation>
</comment>
<comment type="tissue specificity">
    <text evidence="6">Expressed by the venom gland.</text>
</comment>
<comment type="similarity">
    <text evidence="5">Belongs to the venom waprin family.</text>
</comment>
<accession>A7X4M1</accession>
<sequence>MKTLTGLLLVGLLALWIGLPSTSSKILFGCGISPGNPFPCSLPGLTGNRCRRDYDCPQTLRCCNFRCSRSCRIPPVLPWSCPRNPFKCTIPGIDRCRYDYDCPGRQRCCYYSCSRICK</sequence>
<keyword id="KW-0044">Antibiotic</keyword>
<keyword id="KW-0929">Antimicrobial</keyword>
<keyword id="KW-1015">Disulfide bond</keyword>
<keyword id="KW-0677">Repeat</keyword>
<keyword id="KW-0964">Secreted</keyword>
<keyword id="KW-0732">Signal</keyword>
<protein>
    <recommendedName>
        <fullName evidence="4">Waprin-Enh1</fullName>
    </recommendedName>
</protein>
<organism>
    <name type="scientific">Pseudoferania polylepis</name>
    <name type="common">Macleay's water snake</name>
    <name type="synonym">Enhydris polylepis</name>
    <dbReference type="NCBI Taxonomy" id="338839"/>
    <lineage>
        <taxon>Eukaryota</taxon>
        <taxon>Metazoa</taxon>
        <taxon>Chordata</taxon>
        <taxon>Craniata</taxon>
        <taxon>Vertebrata</taxon>
        <taxon>Euteleostomi</taxon>
        <taxon>Lepidosauria</taxon>
        <taxon>Squamata</taxon>
        <taxon>Bifurcata</taxon>
        <taxon>Unidentata</taxon>
        <taxon>Episquamata</taxon>
        <taxon>Toxicofera</taxon>
        <taxon>Serpentes</taxon>
        <taxon>Colubroidea</taxon>
        <taxon>Homalopsidae</taxon>
        <taxon>Pseudoferania</taxon>
    </lineage>
</organism>
<feature type="signal peptide" evidence="2">
    <location>
        <begin position="1"/>
        <end position="24"/>
    </location>
</feature>
<feature type="chain" id="PRO_0000314685" description="Waprin-Enh1">
    <location>
        <begin position="25"/>
        <end position="118"/>
    </location>
</feature>
<feature type="domain" description="WAP 1" evidence="3">
    <location>
        <begin position="25"/>
        <end position="72"/>
    </location>
</feature>
<feature type="domain" description="WAP 2" evidence="3">
    <location>
        <begin position="74"/>
        <end position="118"/>
    </location>
</feature>
<feature type="disulfide bond" evidence="3">
    <location>
        <begin position="30"/>
        <end position="63"/>
    </location>
</feature>
<feature type="disulfide bond" evidence="3">
    <location>
        <begin position="40"/>
        <end position="67"/>
    </location>
</feature>
<feature type="disulfide bond" evidence="3">
    <location>
        <begin position="50"/>
        <end position="62"/>
    </location>
</feature>
<feature type="disulfide bond" evidence="3">
    <location>
        <begin position="56"/>
        <end position="71"/>
    </location>
</feature>
<feature type="disulfide bond" evidence="3">
    <location>
        <begin position="81"/>
        <end position="109"/>
    </location>
</feature>
<feature type="disulfide bond" evidence="3">
    <location>
        <begin position="88"/>
        <end position="113"/>
    </location>
</feature>
<feature type="disulfide bond" evidence="3">
    <location>
        <begin position="96"/>
        <end position="108"/>
    </location>
</feature>
<feature type="disulfide bond" evidence="3">
    <location>
        <begin position="102"/>
        <end position="117"/>
    </location>
</feature>
<reference key="1">
    <citation type="journal article" date="2008" name="Mol. Cell. Proteomics">
        <title>Evolution of an arsenal: structural and functional diversification of the venom system in the advanced snakes (Caenophidia).</title>
        <authorList>
            <person name="Fry B.G."/>
            <person name="Scheib H."/>
            <person name="van der Weerd L."/>
            <person name="Young B."/>
            <person name="McNaughtan J."/>
            <person name="Ramjan S.F.R."/>
            <person name="Vidal N."/>
            <person name="Poelmann R.E."/>
            <person name="Norman J.A."/>
        </authorList>
    </citation>
    <scope>NUCLEOTIDE SEQUENCE [MRNA]</scope>
    <source>
        <tissue>Venom gland</tissue>
    </source>
</reference>
<dbReference type="EMBL" id="EU029745">
    <property type="protein sequence ID" value="ABU68545.1"/>
    <property type="molecule type" value="mRNA"/>
</dbReference>
<dbReference type="SMR" id="A7X4M1"/>
<dbReference type="GO" id="GO:0005576">
    <property type="term" value="C:extracellular region"/>
    <property type="evidence" value="ECO:0000250"/>
    <property type="project" value="UniProtKB"/>
</dbReference>
<dbReference type="GO" id="GO:0030414">
    <property type="term" value="F:peptidase inhibitor activity"/>
    <property type="evidence" value="ECO:0007669"/>
    <property type="project" value="InterPro"/>
</dbReference>
<dbReference type="GO" id="GO:0042742">
    <property type="term" value="P:defense response to bacterium"/>
    <property type="evidence" value="ECO:0007669"/>
    <property type="project" value="UniProtKB-KW"/>
</dbReference>
<dbReference type="GO" id="GO:0044278">
    <property type="term" value="P:venom-mediated disruption of cell wall in another organism"/>
    <property type="evidence" value="ECO:0000250"/>
    <property type="project" value="UniProtKB"/>
</dbReference>
<dbReference type="Gene3D" id="4.10.75.10">
    <property type="entry name" value="Elafin-like"/>
    <property type="match status" value="2"/>
</dbReference>
<dbReference type="InterPro" id="IPR036645">
    <property type="entry name" value="Elafin-like_sf"/>
</dbReference>
<dbReference type="InterPro" id="IPR008197">
    <property type="entry name" value="WAP_dom"/>
</dbReference>
<dbReference type="Pfam" id="PF00095">
    <property type="entry name" value="WAP"/>
    <property type="match status" value="2"/>
</dbReference>
<dbReference type="SUPFAM" id="SSF57256">
    <property type="entry name" value="Elafin-like"/>
    <property type="match status" value="2"/>
</dbReference>
<dbReference type="PROSITE" id="PS51390">
    <property type="entry name" value="WAP"/>
    <property type="match status" value="2"/>
</dbReference>
<name>WAP1_PSEPL</name>